<accession>Q63KK7</accession>
<protein>
    <recommendedName>
        <fullName evidence="1">Oxygen-dependent choline dehydrogenase</fullName>
        <shortName evidence="1">CDH</shortName>
        <shortName evidence="1">CHD</shortName>
        <ecNumber evidence="1">1.1.99.1</ecNumber>
    </recommendedName>
    <alternativeName>
        <fullName evidence="1">Betaine aldehyde dehydrogenase</fullName>
        <shortName evidence="1">BADH</shortName>
        <ecNumber evidence="1">1.2.1.8</ecNumber>
    </alternativeName>
</protein>
<dbReference type="EC" id="1.1.99.1" evidence="1"/>
<dbReference type="EC" id="1.2.1.8" evidence="1"/>
<dbReference type="EMBL" id="BX571966">
    <property type="protein sequence ID" value="CAH38826.1"/>
    <property type="molecule type" value="Genomic_DNA"/>
</dbReference>
<dbReference type="RefSeq" id="WP_009940671.1">
    <property type="nucleotide sequence ID" value="NC_006351.1"/>
</dbReference>
<dbReference type="RefSeq" id="YP_111365.1">
    <property type="nucleotide sequence ID" value="NC_006351.1"/>
</dbReference>
<dbReference type="SMR" id="Q63KK7"/>
<dbReference type="STRING" id="272560.BPSS1355"/>
<dbReference type="KEGG" id="bps:BPSS1355"/>
<dbReference type="PATRIC" id="fig|272560.51.peg.4659"/>
<dbReference type="eggNOG" id="COG2303">
    <property type="taxonomic scope" value="Bacteria"/>
</dbReference>
<dbReference type="UniPathway" id="UPA00529">
    <property type="reaction ID" value="UER00385"/>
</dbReference>
<dbReference type="Proteomes" id="UP000000605">
    <property type="component" value="Chromosome 2"/>
</dbReference>
<dbReference type="GO" id="GO:0016020">
    <property type="term" value="C:membrane"/>
    <property type="evidence" value="ECO:0007669"/>
    <property type="project" value="TreeGrafter"/>
</dbReference>
<dbReference type="GO" id="GO:0008802">
    <property type="term" value="F:betaine-aldehyde dehydrogenase (NAD+) activity"/>
    <property type="evidence" value="ECO:0007669"/>
    <property type="project" value="UniProtKB-EC"/>
</dbReference>
<dbReference type="GO" id="GO:0008812">
    <property type="term" value="F:choline dehydrogenase activity"/>
    <property type="evidence" value="ECO:0007669"/>
    <property type="project" value="UniProtKB-UniRule"/>
</dbReference>
<dbReference type="GO" id="GO:0050660">
    <property type="term" value="F:flavin adenine dinucleotide binding"/>
    <property type="evidence" value="ECO:0007669"/>
    <property type="project" value="InterPro"/>
</dbReference>
<dbReference type="GO" id="GO:0019285">
    <property type="term" value="P:glycine betaine biosynthetic process from choline"/>
    <property type="evidence" value="ECO:0007669"/>
    <property type="project" value="UniProtKB-UniRule"/>
</dbReference>
<dbReference type="Gene3D" id="3.50.50.60">
    <property type="entry name" value="FAD/NAD(P)-binding domain"/>
    <property type="match status" value="1"/>
</dbReference>
<dbReference type="Gene3D" id="3.30.560.10">
    <property type="entry name" value="Glucose Oxidase, domain 3"/>
    <property type="match status" value="1"/>
</dbReference>
<dbReference type="HAMAP" id="MF_00750">
    <property type="entry name" value="Choline_dehydrogen"/>
    <property type="match status" value="1"/>
</dbReference>
<dbReference type="InterPro" id="IPR011533">
    <property type="entry name" value="BetA"/>
</dbReference>
<dbReference type="InterPro" id="IPR036188">
    <property type="entry name" value="FAD/NAD-bd_sf"/>
</dbReference>
<dbReference type="InterPro" id="IPR012132">
    <property type="entry name" value="GMC_OxRdtase"/>
</dbReference>
<dbReference type="InterPro" id="IPR000172">
    <property type="entry name" value="GMC_OxRdtase_N"/>
</dbReference>
<dbReference type="InterPro" id="IPR007867">
    <property type="entry name" value="GMC_OxRtase_C"/>
</dbReference>
<dbReference type="NCBIfam" id="TIGR01810">
    <property type="entry name" value="betA"/>
    <property type="match status" value="1"/>
</dbReference>
<dbReference type="NCBIfam" id="NF002550">
    <property type="entry name" value="PRK02106.1"/>
    <property type="match status" value="1"/>
</dbReference>
<dbReference type="PANTHER" id="PTHR11552:SF147">
    <property type="entry name" value="CHOLINE DEHYDROGENASE, MITOCHONDRIAL"/>
    <property type="match status" value="1"/>
</dbReference>
<dbReference type="PANTHER" id="PTHR11552">
    <property type="entry name" value="GLUCOSE-METHANOL-CHOLINE GMC OXIDOREDUCTASE"/>
    <property type="match status" value="1"/>
</dbReference>
<dbReference type="Pfam" id="PF05199">
    <property type="entry name" value="GMC_oxred_C"/>
    <property type="match status" value="1"/>
</dbReference>
<dbReference type="Pfam" id="PF00732">
    <property type="entry name" value="GMC_oxred_N"/>
    <property type="match status" value="1"/>
</dbReference>
<dbReference type="PIRSF" id="PIRSF000137">
    <property type="entry name" value="Alcohol_oxidase"/>
    <property type="match status" value="1"/>
</dbReference>
<dbReference type="SUPFAM" id="SSF54373">
    <property type="entry name" value="FAD-linked reductases, C-terminal domain"/>
    <property type="match status" value="1"/>
</dbReference>
<dbReference type="SUPFAM" id="SSF51905">
    <property type="entry name" value="FAD/NAD(P)-binding domain"/>
    <property type="match status" value="1"/>
</dbReference>
<dbReference type="PROSITE" id="PS00623">
    <property type="entry name" value="GMC_OXRED_1"/>
    <property type="match status" value="1"/>
</dbReference>
<dbReference type="PROSITE" id="PS00624">
    <property type="entry name" value="GMC_OXRED_2"/>
    <property type="match status" value="1"/>
</dbReference>
<feature type="chain" id="PRO_0000258919" description="Oxygen-dependent choline dehydrogenase">
    <location>
        <begin position="1"/>
        <end position="565"/>
    </location>
</feature>
<feature type="active site" description="Proton acceptor" evidence="1">
    <location>
        <position position="474"/>
    </location>
</feature>
<feature type="binding site" evidence="1">
    <location>
        <begin position="7"/>
        <end position="36"/>
    </location>
    <ligand>
        <name>FAD</name>
        <dbReference type="ChEBI" id="CHEBI:57692"/>
    </ligand>
</feature>
<sequence length="565" mass="62703">MTTREFDYIICGAGSAGNVLATRLTEDPGVTVLLLEAGGPDYRFDFRTQMPAALAYPLQGRRYNWAYETDPEPHMNHRRMECGRGKGLGGSSLINGMCYIRGNALDYDNWATHKALEDWAYLDCLPYFRKAETRDVGPNDYHGGDGPVSVTTSKPGVNPLFEAMVEAGVQAGYPRTDDLNGYQQEGFGPMDRTVTPRGRRASTARGYLDQARARPNLEIVTHALADRILFSGKRATGVTFLHGSARVTAHARREVLVCSGAIASPQLLQRSGVGPGEWLRELDIPVVLDLPGVGRNLQDHLEMYIQFECKEPVSLYPALKWWNQPKIGLEWMLNGTGLGASNHFEAGGFIRTRDDDPWPNIQYHFLPVAINYNGSNAIEMHGFQAHVGSMRSPSRGRVKLKSRDPHAHPSILFNYMAEALDWREFRDAIRATREIMRQPALDRFRGRELNPGADLKSDNELDTFVRARAETAFHPSCSCKMGYDDMAVVDNEGRVHGIDGLRVVDASIMPIITTGNLNAPTIMIAEKIADRIRQHKPLERSNAQYYVANGAPARGGKPARAPAVV</sequence>
<comment type="function">
    <text evidence="1">Involved in the biosynthesis of the osmoprotectant glycine betaine. Catalyzes the oxidation of choline to betaine aldehyde and betaine aldehyde to glycine betaine at the same rate.</text>
</comment>
<comment type="catalytic activity">
    <reaction evidence="1">
        <text>choline + A = betaine aldehyde + AH2</text>
        <dbReference type="Rhea" id="RHEA:17433"/>
        <dbReference type="ChEBI" id="CHEBI:13193"/>
        <dbReference type="ChEBI" id="CHEBI:15354"/>
        <dbReference type="ChEBI" id="CHEBI:15710"/>
        <dbReference type="ChEBI" id="CHEBI:17499"/>
        <dbReference type="EC" id="1.1.99.1"/>
    </reaction>
</comment>
<comment type="catalytic activity">
    <reaction evidence="1">
        <text>betaine aldehyde + NAD(+) + H2O = glycine betaine + NADH + 2 H(+)</text>
        <dbReference type="Rhea" id="RHEA:15305"/>
        <dbReference type="ChEBI" id="CHEBI:15377"/>
        <dbReference type="ChEBI" id="CHEBI:15378"/>
        <dbReference type="ChEBI" id="CHEBI:15710"/>
        <dbReference type="ChEBI" id="CHEBI:17750"/>
        <dbReference type="ChEBI" id="CHEBI:57540"/>
        <dbReference type="ChEBI" id="CHEBI:57945"/>
        <dbReference type="EC" id="1.2.1.8"/>
    </reaction>
</comment>
<comment type="cofactor">
    <cofactor evidence="1">
        <name>FAD</name>
        <dbReference type="ChEBI" id="CHEBI:57692"/>
    </cofactor>
</comment>
<comment type="pathway">
    <text evidence="1">Amine and polyamine biosynthesis; betaine biosynthesis via choline pathway; betaine aldehyde from choline (cytochrome c reductase route): step 1/1.</text>
</comment>
<comment type="similarity">
    <text evidence="1">Belongs to the GMC oxidoreductase family.</text>
</comment>
<reference key="1">
    <citation type="journal article" date="2004" name="Proc. Natl. Acad. Sci. U.S.A.">
        <title>Genomic plasticity of the causative agent of melioidosis, Burkholderia pseudomallei.</title>
        <authorList>
            <person name="Holden M.T.G."/>
            <person name="Titball R.W."/>
            <person name="Peacock S.J."/>
            <person name="Cerdeno-Tarraga A.-M."/>
            <person name="Atkins T."/>
            <person name="Crossman L.C."/>
            <person name="Pitt T."/>
            <person name="Churcher C."/>
            <person name="Mungall K.L."/>
            <person name="Bentley S.D."/>
            <person name="Sebaihia M."/>
            <person name="Thomson N.R."/>
            <person name="Bason N."/>
            <person name="Beacham I.R."/>
            <person name="Brooks K."/>
            <person name="Brown K.A."/>
            <person name="Brown N.F."/>
            <person name="Challis G.L."/>
            <person name="Cherevach I."/>
            <person name="Chillingworth T."/>
            <person name="Cronin A."/>
            <person name="Crossett B."/>
            <person name="Davis P."/>
            <person name="DeShazer D."/>
            <person name="Feltwell T."/>
            <person name="Fraser A."/>
            <person name="Hance Z."/>
            <person name="Hauser H."/>
            <person name="Holroyd S."/>
            <person name="Jagels K."/>
            <person name="Keith K.E."/>
            <person name="Maddison M."/>
            <person name="Moule S."/>
            <person name="Price C."/>
            <person name="Quail M.A."/>
            <person name="Rabbinowitsch E."/>
            <person name="Rutherford K."/>
            <person name="Sanders M."/>
            <person name="Simmonds M."/>
            <person name="Songsivilai S."/>
            <person name="Stevens K."/>
            <person name="Tumapa S."/>
            <person name="Vesaratchavest M."/>
            <person name="Whitehead S."/>
            <person name="Yeats C."/>
            <person name="Barrell B.G."/>
            <person name="Oyston P.C.F."/>
            <person name="Parkhill J."/>
        </authorList>
    </citation>
    <scope>NUCLEOTIDE SEQUENCE [LARGE SCALE GENOMIC DNA]</scope>
    <source>
        <strain>K96243</strain>
    </source>
</reference>
<gene>
    <name evidence="1" type="primary">betA</name>
    <name type="ordered locus">BPSS1355</name>
</gene>
<evidence type="ECO:0000255" key="1">
    <source>
        <dbReference type="HAMAP-Rule" id="MF_00750"/>
    </source>
</evidence>
<organism>
    <name type="scientific">Burkholderia pseudomallei (strain K96243)</name>
    <dbReference type="NCBI Taxonomy" id="272560"/>
    <lineage>
        <taxon>Bacteria</taxon>
        <taxon>Pseudomonadati</taxon>
        <taxon>Pseudomonadota</taxon>
        <taxon>Betaproteobacteria</taxon>
        <taxon>Burkholderiales</taxon>
        <taxon>Burkholderiaceae</taxon>
        <taxon>Burkholderia</taxon>
        <taxon>pseudomallei group</taxon>
    </lineage>
</organism>
<name>BETA_BURPS</name>
<keyword id="KW-0274">FAD</keyword>
<keyword id="KW-0285">Flavoprotein</keyword>
<keyword id="KW-0520">NAD</keyword>
<keyword id="KW-0560">Oxidoreductase</keyword>
<keyword id="KW-1185">Reference proteome</keyword>
<proteinExistence type="inferred from homology"/>